<reference key="1">
    <citation type="journal article" date="2000" name="Biochem. Biophys. Res. Commun.">
        <title>Kassinatuerin-1: a peptide with broad-spectrum antimicrobial activity isolated from the skin of the hyperoliid frog, Kassina senegalensis.</title>
        <authorList>
            <person name="Mattute B."/>
            <person name="Knoop F.C."/>
            <person name="Conlon J.M."/>
        </authorList>
    </citation>
    <scope>PROTEIN SEQUENCE</scope>
    <scope>SYNTHESIS</scope>
    <scope>FUNCTION</scope>
    <scope>MASS SPECTROMETRY</scope>
    <scope>AMIDATION AT ILE-21</scope>
    <source>
        <tissue>Skin</tissue>
    </source>
</reference>
<reference key="2">
    <citation type="journal article" date="2005" name="Peptides">
        <title>Antimicrobial and cytolytic properties of the frog skin peptide, kassinatuerin-1 and its L- and D-lysine-substituted derivatives.</title>
        <authorList>
            <person name="Conlon J.M."/>
            <person name="Abraham B."/>
            <person name="Galadari S."/>
            <person name="Knoop F.C."/>
            <person name="Sonnevend A."/>
            <person name="Pal T."/>
        </authorList>
    </citation>
    <scope>SYNTHESIS</scope>
    <scope>FUNCTION</scope>
    <scope>MINIMAL INHIBITORY CONCENTRATION</scope>
    <scope>MUTAGENESIS OF GLY-7; ALA-13; SER-18 AND ASP-19</scope>
</reference>
<keyword id="KW-0027">Amidation</keyword>
<keyword id="KW-0044">Antibiotic</keyword>
<keyword id="KW-0929">Antimicrobial</keyword>
<keyword id="KW-0204">Cytolysis</keyword>
<keyword id="KW-0903">Direct protein sequencing</keyword>
<keyword id="KW-0295">Fungicide</keyword>
<keyword id="KW-0354">Hemolysis</keyword>
<keyword id="KW-0964">Secreted</keyword>
<organism>
    <name type="scientific">Kassina senegalensis</name>
    <name type="common">Senegal running frog</name>
    <dbReference type="NCBI Taxonomy" id="8415"/>
    <lineage>
        <taxon>Eukaryota</taxon>
        <taxon>Metazoa</taxon>
        <taxon>Chordata</taxon>
        <taxon>Craniata</taxon>
        <taxon>Vertebrata</taxon>
        <taxon>Euteleostomi</taxon>
        <taxon>Amphibia</taxon>
        <taxon>Batrachia</taxon>
        <taxon>Anura</taxon>
        <taxon>Neobatrachia</taxon>
        <taxon>Microhyloidea</taxon>
        <taxon>Hyperoliidae</taxon>
        <taxon>Kassina</taxon>
    </lineage>
</organism>
<dbReference type="GO" id="GO:0005576">
    <property type="term" value="C:extracellular region"/>
    <property type="evidence" value="ECO:0007669"/>
    <property type="project" value="UniProtKB-SubCell"/>
</dbReference>
<dbReference type="GO" id="GO:0042742">
    <property type="term" value="P:defense response to bacterium"/>
    <property type="evidence" value="ECO:0007669"/>
    <property type="project" value="UniProtKB-KW"/>
</dbReference>
<dbReference type="GO" id="GO:0050832">
    <property type="term" value="P:defense response to fungus"/>
    <property type="evidence" value="ECO:0007669"/>
    <property type="project" value="UniProtKB-KW"/>
</dbReference>
<dbReference type="GO" id="GO:0031640">
    <property type="term" value="P:killing of cells of another organism"/>
    <property type="evidence" value="ECO:0007669"/>
    <property type="project" value="UniProtKB-KW"/>
</dbReference>
<proteinExistence type="evidence at protein level"/>
<evidence type="ECO:0000269" key="1">
    <source>
    </source>
</evidence>
<evidence type="ECO:0000269" key="2">
    <source>
    </source>
</evidence>
<name>KAS1_KASSE</name>
<protein>
    <recommendedName>
        <fullName>Kassinatuerin-1</fullName>
    </recommendedName>
</protein>
<sequence length="21" mass="2284">GFMKYIGPLIPHAVKAISDLI</sequence>
<comment type="function">
    <text evidence="1 2">Shows broad-spectrum antimicrobial activity against the Gram-negative bacterium E.coli (MIC=6.25 uM), K.pneumoniae (MIC=25 uM), E.cloacae (MIC=6.25 uM), P.aeruginosa (MIC=25 uM), the Gram-positive bacterium S.aureus (MIC=6.25 uM), S.epidermidis (MIC=6.25 uM), E.faecalis (MIC=12.5 uM), and the fungus C.albicans (MIC=100 uM). Has no antimicrobial effect against P.mirabilis (MIC&gt;100 uM). Has relatively high cytolytic and hemolytic activities. Its alpha-helix has considerable amphipathic character.</text>
</comment>
<comment type="subcellular location">
    <subcellularLocation>
        <location>Secreted</location>
    </subcellularLocation>
</comment>
<comment type="tissue specificity">
    <text>Expressed by the skin dorsal glands.</text>
</comment>
<comment type="mass spectrometry" mass="2282.5" method="Electrospray" evidence="1"/>
<comment type="miscellaneous">
    <text>This peptide was also synthesized without its N-terminal amidation. This modification decreases its antimicrobial and hemolytic activities.</text>
</comment>
<feature type="peptide" id="PRO_0000043808" description="Kassinatuerin-1">
    <location>
        <begin position="1"/>
        <end position="21"/>
    </location>
</feature>
<feature type="modified residue" description="Isoleucine amide" evidence="1">
    <location>
        <position position="21"/>
    </location>
</feature>
<feature type="mutagenesis site" description="When associated with K-19, no change in antibacterial activity against E.coli and S.aureus, 2-fold increase in antimicrobial activity against C.albicans, little increase in hemolytic activity. When associated with K-18 and K-19, no change in antibacterial activity against E.coli and S.aureus, 4-fold increase in antimicrobial activity against C.albicans, little increase in hemolytic activity." evidence="2">
    <original>G</original>
    <variation>K</variation>
    <location>
        <position position="7"/>
    </location>
</feature>
<feature type="mutagenesis site" description="Loss of antimicrobial activity, loss of hemolytic activity." evidence="2">
    <original>A</original>
    <variation>K</variation>
    <location>
        <position position="13"/>
    </location>
</feature>
<feature type="mutagenesis site" description="When associated with K-19, no change in antibacterial activity against E.coli, 2-fold increase in antibacterial activity against S.aureus, 4-fold increase in antimicrobial activity against C.albicans, 2.6-fold increase in hemolytic activity. When associated with K-7 and K-19, no change in antibacterial activity against E.coli and S.aureus, 4-fold increase in antimicrobial activity against C.albicans, little increase in hemolytic activity." evidence="2">
    <original>S</original>
    <variation>K</variation>
    <location>
        <position position="18"/>
    </location>
</feature>
<feature type="mutagenesis site" description="No change in antibacterial activity against E.coli, 2-fold increase in antibacterial activity against S.aureus, 2-fold increase in antimicrobial activity against C.albicans, little increase in hemolytic activity. When associated with K-18, no change in antibacterial activity against E.coli, 2-fold increase in antibacterial activity against S.aureus, 4-fold increase in antimicrobial activity against C.albicans, 2.6-fold increase in hemolytic activity. When associated with K-7, no change in antibacterial activity against E.coli and S.aureus, 2-fold increase in antimicrobial activity against C.albicans, little increase in hemolytic activity. When associated with K-18 and K-7, no change in antibacterial activity against E.coli and S.aureus, 4-fold increase in antimicrobial activity against C.albicans, little increase in hemolytic activity." evidence="2">
    <original>D</original>
    <variation>K</variation>
    <location>
        <position position="19"/>
    </location>
</feature>
<accession>P0C010</accession>